<name>NIKR_NITV2</name>
<keyword id="KW-0238">DNA-binding</keyword>
<keyword id="KW-0479">Metal-binding</keyword>
<keyword id="KW-0533">Nickel</keyword>
<keyword id="KW-1185">Reference proteome</keyword>
<keyword id="KW-0804">Transcription</keyword>
<keyword id="KW-0805">Transcription regulation</keyword>
<dbReference type="EMBL" id="AE017285">
    <property type="protein sequence ID" value="AAS97363.1"/>
    <property type="molecule type" value="Genomic_DNA"/>
</dbReference>
<dbReference type="RefSeq" id="WP_010940151.1">
    <property type="nucleotide sequence ID" value="NC_002937.3"/>
</dbReference>
<dbReference type="RefSeq" id="YP_012103.1">
    <property type="nucleotide sequence ID" value="NC_002937.3"/>
</dbReference>
<dbReference type="SMR" id="Q727G4"/>
<dbReference type="STRING" id="882.DVU_2891"/>
<dbReference type="PaxDb" id="882-DVU_2891"/>
<dbReference type="EnsemblBacteria" id="AAS97363">
    <property type="protein sequence ID" value="AAS97363"/>
    <property type="gene ID" value="DVU_2891"/>
</dbReference>
<dbReference type="KEGG" id="dvu:DVU_2891"/>
<dbReference type="PATRIC" id="fig|882.5.peg.2612"/>
<dbReference type="eggNOG" id="COG0864">
    <property type="taxonomic scope" value="Bacteria"/>
</dbReference>
<dbReference type="HOGENOM" id="CLU_113319_1_2_7"/>
<dbReference type="OrthoDB" id="9806294at2"/>
<dbReference type="PhylomeDB" id="Q727G4"/>
<dbReference type="Proteomes" id="UP000002194">
    <property type="component" value="Chromosome"/>
</dbReference>
<dbReference type="GO" id="GO:0003677">
    <property type="term" value="F:DNA binding"/>
    <property type="evidence" value="ECO:0007669"/>
    <property type="project" value="UniProtKB-KW"/>
</dbReference>
<dbReference type="GO" id="GO:0003700">
    <property type="term" value="F:DNA-binding transcription factor activity"/>
    <property type="evidence" value="ECO:0007669"/>
    <property type="project" value="UniProtKB-UniRule"/>
</dbReference>
<dbReference type="GO" id="GO:0016151">
    <property type="term" value="F:nickel cation binding"/>
    <property type="evidence" value="ECO:0007669"/>
    <property type="project" value="UniProtKB-UniRule"/>
</dbReference>
<dbReference type="GO" id="GO:0010045">
    <property type="term" value="P:response to nickel cation"/>
    <property type="evidence" value="ECO:0007669"/>
    <property type="project" value="InterPro"/>
</dbReference>
<dbReference type="CDD" id="cd22231">
    <property type="entry name" value="RHH_NikR_HicB-like"/>
    <property type="match status" value="1"/>
</dbReference>
<dbReference type="Gene3D" id="3.30.70.1150">
    <property type="entry name" value="ACT-like. Chain A, domain 2"/>
    <property type="match status" value="1"/>
</dbReference>
<dbReference type="Gene3D" id="1.10.1220.10">
    <property type="entry name" value="Met repressor-like"/>
    <property type="match status" value="1"/>
</dbReference>
<dbReference type="HAMAP" id="MF_00476">
    <property type="entry name" value="NikR"/>
    <property type="match status" value="1"/>
</dbReference>
<dbReference type="InterPro" id="IPR027271">
    <property type="entry name" value="Acetolactate_synth/TF_NikR_C"/>
</dbReference>
<dbReference type="InterPro" id="IPR045865">
    <property type="entry name" value="ACT-like_dom_sf"/>
</dbReference>
<dbReference type="InterPro" id="IPR013321">
    <property type="entry name" value="Arc_rbn_hlx_hlx"/>
</dbReference>
<dbReference type="InterPro" id="IPR002145">
    <property type="entry name" value="CopG"/>
</dbReference>
<dbReference type="InterPro" id="IPR050192">
    <property type="entry name" value="CopG/NikR_regulator"/>
</dbReference>
<dbReference type="InterPro" id="IPR022988">
    <property type="entry name" value="Ni_resp_reg_NikR"/>
</dbReference>
<dbReference type="InterPro" id="IPR010985">
    <property type="entry name" value="Ribbon_hlx_hlx"/>
</dbReference>
<dbReference type="InterPro" id="IPR014864">
    <property type="entry name" value="TF_NikR_Ni-bd_C"/>
</dbReference>
<dbReference type="NCBIfam" id="NF001884">
    <property type="entry name" value="PRK00630.1"/>
    <property type="match status" value="1"/>
</dbReference>
<dbReference type="NCBIfam" id="NF002169">
    <property type="entry name" value="PRK01002.1"/>
    <property type="match status" value="1"/>
</dbReference>
<dbReference type="NCBIfam" id="NF002815">
    <property type="entry name" value="PRK02967.1"/>
    <property type="match status" value="1"/>
</dbReference>
<dbReference type="NCBIfam" id="NF003381">
    <property type="entry name" value="PRK04460.1"/>
    <property type="match status" value="1"/>
</dbReference>
<dbReference type="PANTHER" id="PTHR34719">
    <property type="entry name" value="NICKEL-RESPONSIVE REGULATOR"/>
    <property type="match status" value="1"/>
</dbReference>
<dbReference type="PANTHER" id="PTHR34719:SF2">
    <property type="entry name" value="NICKEL-RESPONSIVE REGULATOR"/>
    <property type="match status" value="1"/>
</dbReference>
<dbReference type="Pfam" id="PF08753">
    <property type="entry name" value="NikR_C"/>
    <property type="match status" value="1"/>
</dbReference>
<dbReference type="Pfam" id="PF01402">
    <property type="entry name" value="RHH_1"/>
    <property type="match status" value="1"/>
</dbReference>
<dbReference type="SUPFAM" id="SSF55021">
    <property type="entry name" value="ACT-like"/>
    <property type="match status" value="1"/>
</dbReference>
<dbReference type="SUPFAM" id="SSF47598">
    <property type="entry name" value="Ribbon-helix-helix"/>
    <property type="match status" value="1"/>
</dbReference>
<evidence type="ECO:0000255" key="1">
    <source>
        <dbReference type="HAMAP-Rule" id="MF_00476"/>
    </source>
</evidence>
<accession>Q727G4</accession>
<gene>
    <name type="ordered locus">DVU_2891</name>
</gene>
<organism>
    <name type="scientific">Nitratidesulfovibrio vulgaris (strain ATCC 29579 / DSM 644 / CCUG 34227 / NCIMB 8303 / VKM B-1760 / Hildenborough)</name>
    <name type="common">Desulfovibrio vulgaris</name>
    <dbReference type="NCBI Taxonomy" id="882"/>
    <lineage>
        <taxon>Bacteria</taxon>
        <taxon>Pseudomonadati</taxon>
        <taxon>Thermodesulfobacteriota</taxon>
        <taxon>Desulfovibrionia</taxon>
        <taxon>Desulfovibrionales</taxon>
        <taxon>Desulfovibrionaceae</taxon>
        <taxon>Nitratidesulfovibrio</taxon>
    </lineage>
</organism>
<sequence length="139" mass="15916">MGRTIRFGVSLDSELLDKFDVLCDERCYQTRSEAIRDLIRNTLVQQEWEDTDREIAGTLTLVYDHHKSDLAQRLTEIQHDVHDIIITSLHVHLDHYNCLEVLVLKGPGQQVRNLAQRLISTKGVKHGKLSLTTTGQDLT</sequence>
<comment type="function">
    <text evidence="1">Transcriptional regulator.</text>
</comment>
<comment type="cofactor">
    <cofactor evidence="1">
        <name>Ni(2+)</name>
        <dbReference type="ChEBI" id="CHEBI:49786"/>
    </cofactor>
    <text evidence="1">Binds 1 nickel ion per subunit.</text>
</comment>
<comment type="similarity">
    <text evidence="1">Belongs to the transcriptional regulatory CopG/NikR family.</text>
</comment>
<proteinExistence type="inferred from homology"/>
<reference key="1">
    <citation type="journal article" date="2004" name="Nat. Biotechnol.">
        <title>The genome sequence of the anaerobic, sulfate-reducing bacterium Desulfovibrio vulgaris Hildenborough.</title>
        <authorList>
            <person name="Heidelberg J.F."/>
            <person name="Seshadri R."/>
            <person name="Haveman S.A."/>
            <person name="Hemme C.L."/>
            <person name="Paulsen I.T."/>
            <person name="Kolonay J.F."/>
            <person name="Eisen J.A."/>
            <person name="Ward N.L."/>
            <person name="Methe B.A."/>
            <person name="Brinkac L.M."/>
            <person name="Daugherty S.C."/>
            <person name="DeBoy R.T."/>
            <person name="Dodson R.J."/>
            <person name="Durkin A.S."/>
            <person name="Madupu R."/>
            <person name="Nelson W.C."/>
            <person name="Sullivan S.A."/>
            <person name="Fouts D.E."/>
            <person name="Haft D.H."/>
            <person name="Selengut J."/>
            <person name="Peterson J.D."/>
            <person name="Davidsen T.M."/>
            <person name="Zafar N."/>
            <person name="Zhou L."/>
            <person name="Radune D."/>
            <person name="Dimitrov G."/>
            <person name="Hance M."/>
            <person name="Tran K."/>
            <person name="Khouri H.M."/>
            <person name="Gill J."/>
            <person name="Utterback T.R."/>
            <person name="Feldblyum T.V."/>
            <person name="Wall J.D."/>
            <person name="Voordouw G."/>
            <person name="Fraser C.M."/>
        </authorList>
    </citation>
    <scope>NUCLEOTIDE SEQUENCE [LARGE SCALE GENOMIC DNA]</scope>
    <source>
        <strain>ATCC 29579 / DSM 644 / CCUG 34227 / NCIMB 8303 / VKM B-1760 / Hildenborough</strain>
    </source>
</reference>
<protein>
    <recommendedName>
        <fullName evidence="1">Putative nickel-responsive regulator</fullName>
    </recommendedName>
</protein>
<feature type="chain" id="PRO_0000139288" description="Putative nickel-responsive regulator">
    <location>
        <begin position="1"/>
        <end position="139"/>
    </location>
</feature>
<feature type="binding site" evidence="1">
    <location>
        <position position="79"/>
    </location>
    <ligand>
        <name>Ni(2+)</name>
        <dbReference type="ChEBI" id="CHEBI:49786"/>
    </ligand>
</feature>
<feature type="binding site" evidence="1">
    <location>
        <position position="90"/>
    </location>
    <ligand>
        <name>Ni(2+)</name>
        <dbReference type="ChEBI" id="CHEBI:49786"/>
    </ligand>
</feature>
<feature type="binding site" evidence="1">
    <location>
        <position position="92"/>
    </location>
    <ligand>
        <name>Ni(2+)</name>
        <dbReference type="ChEBI" id="CHEBI:49786"/>
    </ligand>
</feature>
<feature type="binding site" evidence="1">
    <location>
        <position position="98"/>
    </location>
    <ligand>
        <name>Ni(2+)</name>
        <dbReference type="ChEBI" id="CHEBI:49786"/>
    </ligand>
</feature>